<dbReference type="EC" id="5.2.1.8"/>
<dbReference type="EMBL" id="AY225339">
    <property type="protein sequence ID" value="AAO39020.1"/>
    <property type="molecule type" value="mRNA"/>
</dbReference>
<dbReference type="EMBL" id="AY278607">
    <property type="protein sequence ID" value="AAQ84561.1"/>
    <property type="molecule type" value="mRNA"/>
</dbReference>
<dbReference type="EMBL" id="GQ372970">
    <property type="protein sequence ID" value="ACU65096.1"/>
    <property type="molecule type" value="mRNA"/>
</dbReference>
<dbReference type="EMBL" id="BX538124">
    <property type="protein sequence ID" value="CAD98028.1"/>
    <property type="status" value="ALT_INIT"/>
    <property type="molecule type" value="mRNA"/>
</dbReference>
<dbReference type="EMBL" id="BX647405">
    <property type="status" value="NOT_ANNOTATED_CDS"/>
    <property type="molecule type" value="mRNA"/>
</dbReference>
<dbReference type="EMBL" id="AC005387">
    <property type="protein sequence ID" value="AAC28753.1"/>
    <property type="molecule type" value="Genomic_DNA"/>
</dbReference>
<dbReference type="EMBL" id="CH471106">
    <property type="protein sequence ID" value="EAW84709.1"/>
    <property type="molecule type" value="Genomic_DNA"/>
</dbReference>
<dbReference type="EMBL" id="L37033">
    <property type="protein sequence ID" value="AAB00102.1"/>
    <property type="status" value="ALT_SEQ"/>
    <property type="molecule type" value="mRNA"/>
</dbReference>
<dbReference type="EMBL" id="AK222838">
    <property type="protein sequence ID" value="BAD96558.1"/>
    <property type="molecule type" value="mRNA"/>
</dbReference>
<dbReference type="EMBL" id="BC009966">
    <property type="protein sequence ID" value="AAH09966.1"/>
    <property type="status" value="ALT_INIT"/>
    <property type="molecule type" value="mRNA"/>
</dbReference>
<dbReference type="CCDS" id="CCDS32961.1">
    <molecule id="Q14318-2"/>
</dbReference>
<dbReference type="CCDS" id="CCDS77266.1">
    <molecule id="Q14318-1"/>
</dbReference>
<dbReference type="RefSeq" id="NP_001295302.1">
    <molecule id="Q14318-1"/>
    <property type="nucleotide sequence ID" value="NM_001308373.2"/>
</dbReference>
<dbReference type="RefSeq" id="NP_036313.3">
    <molecule id="Q14318-2"/>
    <property type="nucleotide sequence ID" value="NM_012181.4"/>
</dbReference>
<dbReference type="RefSeq" id="XP_011526165.1">
    <property type="nucleotide sequence ID" value="XM_011527863.1"/>
</dbReference>
<dbReference type="PDB" id="2AWG">
    <property type="method" value="X-ray"/>
    <property type="resolution" value="1.60 A"/>
    <property type="chains" value="A=90-205"/>
</dbReference>
<dbReference type="PDB" id="2D9F">
    <property type="method" value="NMR"/>
    <property type="chains" value="A=91-211"/>
</dbReference>
<dbReference type="PDB" id="2F2D">
    <property type="method" value="NMR"/>
    <property type="chains" value="A=92-210"/>
</dbReference>
<dbReference type="PDB" id="2MF9">
    <property type="method" value="NMR"/>
    <property type="chains" value="A=58-205"/>
</dbReference>
<dbReference type="PDB" id="3EY6">
    <property type="method" value="X-ray"/>
    <property type="resolution" value="1.05 A"/>
    <property type="chains" value="A=92-210"/>
</dbReference>
<dbReference type="PDB" id="5MGX">
    <property type="method" value="X-ray"/>
    <property type="resolution" value="2.18 A"/>
    <property type="chains" value="E/F/G/H=91-380"/>
</dbReference>
<dbReference type="PDBsum" id="2AWG"/>
<dbReference type="PDBsum" id="2D9F"/>
<dbReference type="PDBsum" id="2F2D"/>
<dbReference type="PDBsum" id="2MF9"/>
<dbReference type="PDBsum" id="3EY6"/>
<dbReference type="PDBsum" id="5MGX"/>
<dbReference type="BMRB" id="Q14318"/>
<dbReference type="SMR" id="Q14318"/>
<dbReference type="BioGRID" id="117270">
    <property type="interactions" value="606"/>
</dbReference>
<dbReference type="CORUM" id="Q14318"/>
<dbReference type="DIP" id="DIP-42200N"/>
<dbReference type="ELM" id="Q14318"/>
<dbReference type="FunCoup" id="Q14318">
    <property type="interactions" value="1373"/>
</dbReference>
<dbReference type="IntAct" id="Q14318">
    <property type="interactions" value="207"/>
</dbReference>
<dbReference type="MINT" id="Q14318"/>
<dbReference type="STRING" id="9606.ENSP00000471700"/>
<dbReference type="GuidetoPHARMACOLOGY" id="3177"/>
<dbReference type="GlyGen" id="Q14318">
    <property type="glycosylation" value="1 site, 1 O-linked glycan (1 site)"/>
</dbReference>
<dbReference type="iPTMnet" id="Q14318"/>
<dbReference type="MetOSite" id="Q14318"/>
<dbReference type="PhosphoSitePlus" id="Q14318"/>
<dbReference type="SwissPalm" id="Q14318"/>
<dbReference type="BioMuta" id="FKBP8"/>
<dbReference type="DMDM" id="193806337"/>
<dbReference type="jPOST" id="Q14318"/>
<dbReference type="MassIVE" id="Q14318"/>
<dbReference type="PaxDb" id="9606-ENSP00000476767"/>
<dbReference type="PeptideAtlas" id="Q14318"/>
<dbReference type="ProteomicsDB" id="59962">
    <molecule id="Q14318-1"/>
</dbReference>
<dbReference type="ProteomicsDB" id="59963">
    <molecule id="Q14318-2"/>
</dbReference>
<dbReference type="ProteomicsDB" id="7612"/>
<dbReference type="Pumba" id="Q14318"/>
<dbReference type="Antibodypedia" id="28073">
    <property type="antibodies" value="401 antibodies from 34 providers"/>
</dbReference>
<dbReference type="DNASU" id="23770"/>
<dbReference type="Ensembl" id="ENST00000222308.8">
    <molecule id="Q14318-1"/>
    <property type="protein sequence ID" value="ENSP00000222308.4"/>
    <property type="gene ID" value="ENSG00000105701.16"/>
</dbReference>
<dbReference type="Ensembl" id="ENST00000596558.6">
    <molecule id="Q14318-1"/>
    <property type="protein sequence ID" value="ENSP00000472302.1"/>
    <property type="gene ID" value="ENSG00000105701.16"/>
</dbReference>
<dbReference type="Ensembl" id="ENST00000597960.7">
    <molecule id="Q14318-2"/>
    <property type="protein sequence ID" value="ENSP00000471700.1"/>
    <property type="gene ID" value="ENSG00000105701.16"/>
</dbReference>
<dbReference type="Ensembl" id="ENST00000608443.6">
    <molecule id="Q14318-2"/>
    <property type="protein sequence ID" value="ENSP00000476767.1"/>
    <property type="gene ID" value="ENSG00000105701.16"/>
</dbReference>
<dbReference type="GeneID" id="23770"/>
<dbReference type="KEGG" id="hsa:23770"/>
<dbReference type="MANE-Select" id="ENST00000608443.6">
    <molecule id="Q14318-2"/>
    <property type="protein sequence ID" value="ENSP00000476767.1"/>
    <property type="RefSeq nucleotide sequence ID" value="NM_012181.5"/>
    <property type="RefSeq protein sequence ID" value="NP_036313.3"/>
</dbReference>
<dbReference type="UCSC" id="uc002njj.2">
    <molecule id="Q14318-1"/>
    <property type="organism name" value="human"/>
</dbReference>
<dbReference type="AGR" id="HGNC:3724"/>
<dbReference type="CTD" id="23770"/>
<dbReference type="DisGeNET" id="23770"/>
<dbReference type="GeneCards" id="FKBP8"/>
<dbReference type="HGNC" id="HGNC:3724">
    <property type="gene designation" value="FKBP8"/>
</dbReference>
<dbReference type="HPA" id="ENSG00000105701">
    <property type="expression patterns" value="Low tissue specificity"/>
</dbReference>
<dbReference type="MIM" id="604840">
    <property type="type" value="gene"/>
</dbReference>
<dbReference type="neXtProt" id="NX_Q14318"/>
<dbReference type="OpenTargets" id="ENSG00000105701"/>
<dbReference type="PharmGKB" id="PA28165"/>
<dbReference type="VEuPathDB" id="HostDB:ENSG00000105701"/>
<dbReference type="eggNOG" id="KOG0543">
    <property type="taxonomic scope" value="Eukaryota"/>
</dbReference>
<dbReference type="GeneTree" id="ENSGT00940000156705"/>
<dbReference type="HOGENOM" id="CLU_013615_1_3_1"/>
<dbReference type="InParanoid" id="Q14318"/>
<dbReference type="OMA" id="IDAWEMV"/>
<dbReference type="OrthoDB" id="532682at2759"/>
<dbReference type="PAN-GO" id="Q14318">
    <property type="GO annotations" value="7 GO annotations based on evolutionary models"/>
</dbReference>
<dbReference type="PhylomeDB" id="Q14318"/>
<dbReference type="TreeFam" id="TF105295"/>
<dbReference type="BRENDA" id="5.2.1.8">
    <property type="organism ID" value="2681"/>
</dbReference>
<dbReference type="PathwayCommons" id="Q14318"/>
<dbReference type="Reactome" id="R-HSA-5689880">
    <property type="pathway name" value="Ub-specific processing proteases"/>
</dbReference>
<dbReference type="SABIO-RK" id="Q14318"/>
<dbReference type="SignaLink" id="Q14318"/>
<dbReference type="SIGNOR" id="Q14318"/>
<dbReference type="BioGRID-ORCS" id="23770">
    <property type="hits" value="28 hits in 1155 CRISPR screens"/>
</dbReference>
<dbReference type="CD-CODE" id="FB4E32DD">
    <property type="entry name" value="Presynaptic clusters and postsynaptic densities"/>
</dbReference>
<dbReference type="ChiTaRS" id="FKBP8">
    <property type="organism name" value="human"/>
</dbReference>
<dbReference type="EvolutionaryTrace" id="Q14318"/>
<dbReference type="GeneWiki" id="FKBP8"/>
<dbReference type="GenomeRNAi" id="23770"/>
<dbReference type="Pharos" id="Q14318">
    <property type="development level" value="Tbio"/>
</dbReference>
<dbReference type="PRO" id="PR:Q14318"/>
<dbReference type="Proteomes" id="UP000005640">
    <property type="component" value="Chromosome 19"/>
</dbReference>
<dbReference type="RNAct" id="Q14318">
    <property type="molecule type" value="protein"/>
</dbReference>
<dbReference type="Bgee" id="ENSG00000105701">
    <property type="expression patterns" value="Expressed in right frontal lobe and 176 other cell types or tissues"/>
</dbReference>
<dbReference type="ExpressionAtlas" id="Q14318">
    <property type="expression patterns" value="baseline and differential"/>
</dbReference>
<dbReference type="GO" id="GO:0005829">
    <property type="term" value="C:cytosol"/>
    <property type="evidence" value="ECO:0000314"/>
    <property type="project" value="HPA"/>
</dbReference>
<dbReference type="GO" id="GO:0012505">
    <property type="term" value="C:endomembrane system"/>
    <property type="evidence" value="ECO:0000318"/>
    <property type="project" value="GO_Central"/>
</dbReference>
<dbReference type="GO" id="GO:0005783">
    <property type="term" value="C:endoplasmic reticulum"/>
    <property type="evidence" value="ECO:0000314"/>
    <property type="project" value="HPA"/>
</dbReference>
<dbReference type="GO" id="GO:0005789">
    <property type="term" value="C:endoplasmic reticulum membrane"/>
    <property type="evidence" value="ECO:0007669"/>
    <property type="project" value="Ensembl"/>
</dbReference>
<dbReference type="GO" id="GO:0016020">
    <property type="term" value="C:membrane"/>
    <property type="evidence" value="ECO:0007005"/>
    <property type="project" value="UniProtKB"/>
</dbReference>
<dbReference type="GO" id="GO:0005740">
    <property type="term" value="C:mitochondrial envelope"/>
    <property type="evidence" value="ECO:0000318"/>
    <property type="project" value="GO_Central"/>
</dbReference>
<dbReference type="GO" id="GO:0031966">
    <property type="term" value="C:mitochondrial membrane"/>
    <property type="evidence" value="ECO:0007669"/>
    <property type="project" value="UniProtKB-SubCell"/>
</dbReference>
<dbReference type="GO" id="GO:0005739">
    <property type="term" value="C:mitochondrion"/>
    <property type="evidence" value="ECO:0000314"/>
    <property type="project" value="HPA"/>
</dbReference>
<dbReference type="GO" id="GO:0032991">
    <property type="term" value="C:protein-containing complex"/>
    <property type="evidence" value="ECO:0000315"/>
    <property type="project" value="CAFA"/>
</dbReference>
<dbReference type="GO" id="GO:0005516">
    <property type="term" value="F:calmodulin binding"/>
    <property type="evidence" value="ECO:0000353"/>
    <property type="project" value="DisProt"/>
</dbReference>
<dbReference type="GO" id="GO:0097718">
    <property type="term" value="F:disordered domain specific binding"/>
    <property type="evidence" value="ECO:0000353"/>
    <property type="project" value="CAFA"/>
</dbReference>
<dbReference type="GO" id="GO:0042802">
    <property type="term" value="F:identical protein binding"/>
    <property type="evidence" value="ECO:0000353"/>
    <property type="project" value="IntAct"/>
</dbReference>
<dbReference type="GO" id="GO:0046872">
    <property type="term" value="F:metal ion binding"/>
    <property type="evidence" value="ECO:0007669"/>
    <property type="project" value="UniProtKB-KW"/>
</dbReference>
<dbReference type="GO" id="GO:0003755">
    <property type="term" value="F:peptidyl-prolyl cis-trans isomerase activity"/>
    <property type="evidence" value="ECO:0007669"/>
    <property type="project" value="UniProtKB-KW"/>
</dbReference>
<dbReference type="GO" id="GO:0044183">
    <property type="term" value="F:protein folding chaperone"/>
    <property type="evidence" value="ECO:0000315"/>
    <property type="project" value="MGI"/>
</dbReference>
<dbReference type="GO" id="GO:0006915">
    <property type="term" value="P:apoptotic process"/>
    <property type="evidence" value="ECO:0007669"/>
    <property type="project" value="UniProtKB-KW"/>
</dbReference>
<dbReference type="GO" id="GO:0030509">
    <property type="term" value="P:BMP signaling pathway"/>
    <property type="evidence" value="ECO:0007669"/>
    <property type="project" value="Ensembl"/>
</dbReference>
<dbReference type="GO" id="GO:0043010">
    <property type="term" value="P:camera-type eye development"/>
    <property type="evidence" value="ECO:0007669"/>
    <property type="project" value="Ensembl"/>
</dbReference>
<dbReference type="GO" id="GO:0021904">
    <property type="term" value="P:dorsal/ventral neural tube patterning"/>
    <property type="evidence" value="ECO:0007669"/>
    <property type="project" value="Ensembl"/>
</dbReference>
<dbReference type="GO" id="GO:0035556">
    <property type="term" value="P:intracellular signal transduction"/>
    <property type="evidence" value="ECO:0000304"/>
    <property type="project" value="ProtInc"/>
</dbReference>
<dbReference type="GO" id="GO:0035264">
    <property type="term" value="P:multicellular organism growth"/>
    <property type="evidence" value="ECO:0007669"/>
    <property type="project" value="Ensembl"/>
</dbReference>
<dbReference type="GO" id="GO:0043066">
    <property type="term" value="P:negative regulation of apoptotic process"/>
    <property type="evidence" value="ECO:0000318"/>
    <property type="project" value="GO_Central"/>
</dbReference>
<dbReference type="GO" id="GO:0001933">
    <property type="term" value="P:negative regulation of protein phosphorylation"/>
    <property type="evidence" value="ECO:0000315"/>
    <property type="project" value="CAFA"/>
</dbReference>
<dbReference type="GO" id="GO:0048665">
    <property type="term" value="P:neuron fate specification"/>
    <property type="evidence" value="ECO:0007669"/>
    <property type="project" value="Ensembl"/>
</dbReference>
<dbReference type="GO" id="GO:0030513">
    <property type="term" value="P:positive regulation of BMP signaling pathway"/>
    <property type="evidence" value="ECO:0007669"/>
    <property type="project" value="Ensembl"/>
</dbReference>
<dbReference type="GO" id="GO:0006457">
    <property type="term" value="P:protein folding"/>
    <property type="evidence" value="ECO:0000315"/>
    <property type="project" value="MGI"/>
</dbReference>
<dbReference type="GO" id="GO:0070585">
    <property type="term" value="P:protein localization to mitochondrion"/>
    <property type="evidence" value="ECO:0000353"/>
    <property type="project" value="DisProt"/>
</dbReference>
<dbReference type="GO" id="GO:0010468">
    <property type="term" value="P:regulation of gene expression"/>
    <property type="evidence" value="ECO:0007669"/>
    <property type="project" value="Ensembl"/>
</dbReference>
<dbReference type="GO" id="GO:1901524">
    <property type="term" value="P:regulation of mitophagy"/>
    <property type="evidence" value="ECO:0000314"/>
    <property type="project" value="DisProt"/>
</dbReference>
<dbReference type="GO" id="GO:0007224">
    <property type="term" value="P:smoothened signaling pathway"/>
    <property type="evidence" value="ECO:0007669"/>
    <property type="project" value="Ensembl"/>
</dbReference>
<dbReference type="FunFam" id="1.25.40.10:FF:000113">
    <property type="entry name" value="Peptidylprolyl isomerase"/>
    <property type="match status" value="1"/>
</dbReference>
<dbReference type="FunFam" id="3.10.50.40:FF:000027">
    <property type="entry name" value="Peptidylprolyl isomerase"/>
    <property type="match status" value="1"/>
</dbReference>
<dbReference type="Gene3D" id="3.10.50.40">
    <property type="match status" value="1"/>
</dbReference>
<dbReference type="Gene3D" id="1.25.40.10">
    <property type="entry name" value="Tetratricopeptide repeat domain"/>
    <property type="match status" value="1"/>
</dbReference>
<dbReference type="InterPro" id="IPR050754">
    <property type="entry name" value="FKBP4/5/8-like"/>
</dbReference>
<dbReference type="InterPro" id="IPR046357">
    <property type="entry name" value="PPIase_dom_sf"/>
</dbReference>
<dbReference type="InterPro" id="IPR001179">
    <property type="entry name" value="PPIase_FKBP_dom"/>
</dbReference>
<dbReference type="InterPro" id="IPR011990">
    <property type="entry name" value="TPR-like_helical_dom_sf"/>
</dbReference>
<dbReference type="InterPro" id="IPR019734">
    <property type="entry name" value="TPR_rpt"/>
</dbReference>
<dbReference type="PANTHER" id="PTHR46512:SF3">
    <property type="entry name" value="PEPTIDYL-PROLYL CIS-TRANS ISOMERASE FKBP8"/>
    <property type="match status" value="1"/>
</dbReference>
<dbReference type="PANTHER" id="PTHR46512">
    <property type="entry name" value="PEPTIDYLPROLYL ISOMERASE"/>
    <property type="match status" value="1"/>
</dbReference>
<dbReference type="Pfam" id="PF00254">
    <property type="entry name" value="FKBP_C"/>
    <property type="match status" value="1"/>
</dbReference>
<dbReference type="Pfam" id="PF13432">
    <property type="entry name" value="TPR_16"/>
    <property type="match status" value="1"/>
</dbReference>
<dbReference type="SMART" id="SM00028">
    <property type="entry name" value="TPR"/>
    <property type="match status" value="3"/>
</dbReference>
<dbReference type="SUPFAM" id="SSF54534">
    <property type="entry name" value="FKBP-like"/>
    <property type="match status" value="1"/>
</dbReference>
<dbReference type="SUPFAM" id="SSF48452">
    <property type="entry name" value="TPR-like"/>
    <property type="match status" value="1"/>
</dbReference>
<dbReference type="PROSITE" id="PS50059">
    <property type="entry name" value="FKBP_PPIASE"/>
    <property type="match status" value="1"/>
</dbReference>
<dbReference type="PROSITE" id="PS50005">
    <property type="entry name" value="TPR"/>
    <property type="match status" value="2"/>
</dbReference>
<dbReference type="PROSITE" id="PS50293">
    <property type="entry name" value="TPR_REGION"/>
    <property type="match status" value="1"/>
</dbReference>
<accession>Q14318</accession>
<accession>C8C9T5</accession>
<accession>Q53GU3</accession>
<accession>Q7Z349</accession>
<accession>Q86YK6</accession>
<proteinExistence type="evidence at protein level"/>
<feature type="chain" id="PRO_0000075331" description="Peptidyl-prolyl cis-trans isomerase FKBP8">
    <location>
        <begin position="1"/>
        <end position="412"/>
    </location>
</feature>
<feature type="transmembrane region" description="Helical" evidence="1">
    <location>
        <begin position="390"/>
        <end position="410"/>
    </location>
</feature>
<feature type="domain" description="PPIase FKBP-type" evidence="2">
    <location>
        <begin position="120"/>
        <end position="204"/>
    </location>
</feature>
<feature type="repeat" description="TPR 1">
    <location>
        <begin position="221"/>
        <end position="254"/>
    </location>
</feature>
<feature type="repeat" description="TPR 2">
    <location>
        <begin position="272"/>
        <end position="305"/>
    </location>
</feature>
<feature type="repeat" description="TPR 3">
    <location>
        <begin position="306"/>
        <end position="339"/>
    </location>
</feature>
<feature type="region of interest" description="Disordered" evidence="3">
    <location>
        <begin position="1"/>
        <end position="68"/>
    </location>
</feature>
<feature type="compositionally biased region" description="Acidic residues" evidence="3">
    <location>
        <begin position="22"/>
        <end position="50"/>
    </location>
</feature>
<feature type="binding site">
    <location>
        <position position="149"/>
    </location>
    <ligand>
        <name>Ca(2+)</name>
        <dbReference type="ChEBI" id="CHEBI:29108"/>
    </ligand>
</feature>
<feature type="binding site">
    <location>
        <position position="151"/>
    </location>
    <ligand>
        <name>Ca(2+)</name>
        <dbReference type="ChEBI" id="CHEBI:29108"/>
    </ligand>
</feature>
<feature type="modified residue" description="Phosphoserine" evidence="20">
    <location>
        <position position="296"/>
    </location>
</feature>
<feature type="cross-link" description="Glycyl lysine isopeptide (Lys-Gly) (interchain with G-Cter in ubiquitin)" evidence="14">
    <location>
        <position position="249"/>
    </location>
</feature>
<feature type="cross-link" description="Glycyl lysine isopeptide (Lys-Gly) (interchain with G-Cter in ubiquitin)" evidence="14">
    <location>
        <position position="271"/>
    </location>
</feature>
<feature type="cross-link" description="Glycyl lysine isopeptide (Lys-Gly) (interchain with G-Cter in ubiquitin)" evidence="14">
    <location>
        <position position="273"/>
    </location>
</feature>
<feature type="cross-link" description="Glycyl lysine isopeptide (Lys-Gly) (interchain with G-Cter in ubiquitin)" evidence="14">
    <location>
        <position position="284"/>
    </location>
</feature>
<feature type="cross-link" description="Glycyl lysine isopeptide (Lys-Gly) (interchain with G-Cter in ubiquitin)" evidence="14">
    <location>
        <position position="307"/>
    </location>
</feature>
<feature type="cross-link" description="Glycyl lysine isopeptide (Lys-Gly) (interchain with G-Cter in ubiquitin)" evidence="14">
    <location>
        <position position="314"/>
    </location>
</feature>
<feature type="cross-link" description="Glycyl lysine isopeptide (Lys-Gly) (interchain with G-Cter in ubiquitin)" evidence="14">
    <location>
        <position position="334"/>
    </location>
</feature>
<feature type="cross-link" description="Glycyl lysine isopeptide (Lys-Gly) (interchain with G-Cter in ubiquitin)" evidence="14">
    <location>
        <position position="340"/>
    </location>
</feature>
<feature type="cross-link" description="Glycyl lysine isopeptide (Lys-Gly) (interchain with G-Cter in ubiquitin)" evidence="14">
    <location>
        <position position="348"/>
    </location>
</feature>
<feature type="cross-link" description="Glycyl lysine isopeptide (Lys-Gly) (interchain with G-Cter in ubiquitin)" evidence="14">
    <location>
        <position position="351"/>
    </location>
</feature>
<feature type="cross-link" description="Glycyl lysine isopeptide (Lys-Gly) (interchain with G-Cter in ubiquitin)" evidence="14">
    <location>
        <position position="352"/>
    </location>
</feature>
<feature type="splice variant" id="VSP_047717" description="In isoform 3." evidence="17">
    <location>
        <begin position="98"/>
        <end position="256"/>
    </location>
</feature>
<feature type="splice variant" id="VSP_034486" description="In isoform 2." evidence="16 18">
    <original>G</original>
    <variation>GS</variation>
    <location>
        <position position="183"/>
    </location>
</feature>
<feature type="sequence variant" id="VAR_044225" description="In dbSNP:rs11574806.">
    <original>A</original>
    <variation>V</variation>
    <location>
        <position position="87"/>
    </location>
</feature>
<feature type="mutagenesis site" description="Abolishes calcium-binding and reduces affinity for BCL2; when associated with Asn-151." evidence="13">
    <original>D</original>
    <variation>N</variation>
    <location>
        <position position="149"/>
    </location>
</feature>
<feature type="mutagenesis site" description="Abolishes calcium-binding and reduces affinity for BCL2; when associated with Asn-149." evidence="13">
    <original>D</original>
    <variation>N</variation>
    <location>
        <position position="151"/>
    </location>
</feature>
<feature type="sequence conflict" description="In Ref. 4; CAD98028." evidence="19" ref="4">
    <original>V</original>
    <variation>A</variation>
    <location>
        <position position="144"/>
    </location>
</feature>
<feature type="sequence conflict" description="In Ref. 4; CAD98028." evidence="19" ref="4">
    <original>H</original>
    <variation>R</variation>
    <location>
        <position position="191"/>
    </location>
</feature>
<feature type="sequence conflict" description="In Ref. 8; BAD96558." evidence="19" ref="8">
    <original>G</original>
    <variation>R</variation>
    <location>
        <position position="206"/>
    </location>
</feature>
<feature type="strand" evidence="23">
    <location>
        <begin position="94"/>
        <end position="108"/>
    </location>
</feature>
<feature type="strand" evidence="22">
    <location>
        <begin position="111"/>
        <end position="113"/>
    </location>
</feature>
<feature type="strand" evidence="23">
    <location>
        <begin position="121"/>
        <end position="131"/>
    </location>
</feature>
<feature type="strand" evidence="23">
    <location>
        <begin position="136"/>
        <end position="146"/>
    </location>
</feature>
<feature type="turn" evidence="22">
    <location>
        <begin position="147"/>
        <end position="150"/>
    </location>
</feature>
<feature type="helix" evidence="23">
    <location>
        <begin position="154"/>
        <end position="157"/>
    </location>
</feature>
<feature type="helix" evidence="23">
    <location>
        <begin position="160"/>
        <end position="162"/>
    </location>
</feature>
<feature type="strand" evidence="23">
    <location>
        <begin position="168"/>
        <end position="173"/>
    </location>
</feature>
<feature type="helix" evidence="23">
    <location>
        <begin position="175"/>
        <end position="177"/>
    </location>
</feature>
<feature type="helix" evidence="23">
    <location>
        <begin position="180"/>
        <end position="182"/>
    </location>
</feature>
<feature type="turn" evidence="23">
    <location>
        <begin position="185"/>
        <end position="187"/>
    </location>
</feature>
<feature type="strand" evidence="21">
    <location>
        <begin position="190"/>
        <end position="192"/>
    </location>
</feature>
<feature type="strand" evidence="23">
    <location>
        <begin position="194"/>
        <end position="204"/>
    </location>
</feature>
<feature type="helix" evidence="24">
    <location>
        <begin position="209"/>
        <end position="211"/>
    </location>
</feature>
<feature type="helix" evidence="24">
    <location>
        <begin position="214"/>
        <end position="233"/>
    </location>
</feature>
<feature type="helix" evidence="24">
    <location>
        <begin position="237"/>
        <end position="252"/>
    </location>
</feature>
<feature type="helix" evidence="24">
    <location>
        <begin position="261"/>
        <end position="284"/>
    </location>
</feature>
<feature type="helix" evidence="24">
    <location>
        <begin position="288"/>
        <end position="301"/>
    </location>
</feature>
<feature type="helix" evidence="24">
    <location>
        <begin position="306"/>
        <end position="319"/>
    </location>
</feature>
<feature type="helix" evidence="24">
    <location>
        <begin position="322"/>
        <end position="335"/>
    </location>
</feature>
<feature type="helix" evidence="24">
    <location>
        <begin position="340"/>
        <end position="354"/>
    </location>
</feature>
<evidence type="ECO:0000255" key="1"/>
<evidence type="ECO:0000255" key="2">
    <source>
        <dbReference type="PROSITE-ProRule" id="PRU00277"/>
    </source>
</evidence>
<evidence type="ECO:0000256" key="3">
    <source>
        <dbReference type="SAM" id="MobiDB-lite"/>
    </source>
</evidence>
<evidence type="ECO:0000269" key="4">
    <source>
    </source>
</evidence>
<evidence type="ECO:0000269" key="5">
    <source>
    </source>
</evidence>
<evidence type="ECO:0000269" key="6">
    <source>
    </source>
</evidence>
<evidence type="ECO:0000269" key="7">
    <source>
    </source>
</evidence>
<evidence type="ECO:0000269" key="8">
    <source>
    </source>
</evidence>
<evidence type="ECO:0000269" key="9">
    <source>
    </source>
</evidence>
<evidence type="ECO:0000269" key="10">
    <source>
    </source>
</evidence>
<evidence type="ECO:0000269" key="11">
    <source>
    </source>
</evidence>
<evidence type="ECO:0000269" key="12">
    <source>
    </source>
</evidence>
<evidence type="ECO:0000269" key="13">
    <source>
    </source>
</evidence>
<evidence type="ECO:0000269" key="14">
    <source>
    </source>
</evidence>
<evidence type="ECO:0000269" key="15">
    <source>
    </source>
</evidence>
<evidence type="ECO:0000303" key="16">
    <source>
    </source>
</evidence>
<evidence type="ECO:0000303" key="17">
    <source>
    </source>
</evidence>
<evidence type="ECO:0000303" key="18">
    <source ref="8"/>
</evidence>
<evidence type="ECO:0000305" key="19"/>
<evidence type="ECO:0007744" key="20">
    <source>
    </source>
</evidence>
<evidence type="ECO:0007829" key="21">
    <source>
        <dbReference type="PDB" id="2F2D"/>
    </source>
</evidence>
<evidence type="ECO:0007829" key="22">
    <source>
        <dbReference type="PDB" id="2MF9"/>
    </source>
</evidence>
<evidence type="ECO:0007829" key="23">
    <source>
        <dbReference type="PDB" id="3EY6"/>
    </source>
</evidence>
<evidence type="ECO:0007829" key="24">
    <source>
        <dbReference type="PDB" id="5MGX"/>
    </source>
</evidence>
<comment type="function">
    <text evidence="4 6 8 15">Constitutively inactive PPiase, which becomes active when bound to calmodulin and calcium. Seems to act as a chaperone for BCL2, targets it to the mitochondria and modulates its phosphorylation state. The BCL2/FKBP8/calmodulin/calcium complex probably interferes with the binding of BCL2 to its targets. The active form of FKBP8 may therefore play a role in the regulation of apoptosis. Involved in the inhibition of viral infection by influenza A viruses (IAV) (PubMed:28169297).</text>
</comment>
<comment type="catalytic activity">
    <reaction evidence="7">
        <text>[protein]-peptidylproline (omega=180) = [protein]-peptidylproline (omega=0)</text>
        <dbReference type="Rhea" id="RHEA:16237"/>
        <dbReference type="Rhea" id="RHEA-COMP:10747"/>
        <dbReference type="Rhea" id="RHEA-COMP:10748"/>
        <dbReference type="ChEBI" id="CHEBI:83833"/>
        <dbReference type="ChEBI" id="CHEBI:83834"/>
        <dbReference type="EC" id="5.2.1.8"/>
    </reaction>
</comment>
<comment type="cofactor">
    <cofactor evidence="7">
        <name>Ca(2+)</name>
        <dbReference type="ChEBI" id="CHEBI:29108"/>
    </cofactor>
</comment>
<comment type="subunit">
    <text evidence="4 5 10 11 12 19">Homomultimers or heteromultimers (Potential). Forms heterodimer with calmodulin. When activated by calmodulin and calcium, interacts with the BH4 domain of BCL2 and weakly with BCL2L1/BCLX isoform Bcl-X(L). Does not bind and inhibit calcineurin. Interacts with ZFYVE27; may negatively regulate ZFYVE27 phosphorylation.</text>
</comment>
<comment type="subunit">
    <text evidence="9">(Microbial infection) Interacts with hepatitis C/HCV protein NS5A.</text>
</comment>
<comment type="interaction">
    <interactant intactId="EBI-724839">
        <id>Q14318</id>
    </interactant>
    <interactant intactId="EBI-11343438">
        <id>Q3SXY8</id>
        <label>ARL13B</label>
    </interactant>
    <organismsDiffer>false</organismsDiffer>
    <experiments>3</experiments>
</comment>
<comment type="interaction">
    <interactant intactId="EBI-724839">
        <id>Q14318</id>
    </interactant>
    <interactant intactId="EBI-7797864">
        <id>P11912</id>
        <label>CD79A</label>
    </interactant>
    <organismsDiffer>false</organismsDiffer>
    <experiments>3</experiments>
</comment>
<comment type="interaction">
    <interactant intactId="EBI-724839">
        <id>Q14318</id>
    </interactant>
    <interactant intactId="EBI-7062247">
        <id>Q9UHD4</id>
        <label>CIDEB</label>
    </interactant>
    <organismsDiffer>false</organismsDiffer>
    <experiments>3</experiments>
</comment>
<comment type="interaction">
    <interactant intactId="EBI-724839">
        <id>Q14318</id>
    </interactant>
    <interactant intactId="EBI-2835281">
        <id>P25025</id>
        <label>CXCR2</label>
    </interactant>
    <organismsDiffer>false</organismsDiffer>
    <experiments>3</experiments>
</comment>
<comment type="interaction">
    <interactant intactId="EBI-724839">
        <id>Q14318</id>
    </interactant>
    <interactant intactId="EBI-8646596">
        <id>P49447</id>
        <label>CYB561</label>
    </interactant>
    <organismsDiffer>false</organismsDiffer>
    <experiments>3</experiments>
</comment>
<comment type="interaction">
    <interactant intactId="EBI-724839">
        <id>Q14318</id>
    </interactant>
    <interactant intactId="EBI-8637742">
        <id>Q53TN4</id>
        <label>CYBRD1</label>
    </interactant>
    <organismsDiffer>false</organismsDiffer>
    <experiments>3</experiments>
</comment>
<comment type="interaction">
    <interactant intactId="EBI-724839">
        <id>Q14318</id>
    </interactant>
    <interactant intactId="EBI-3915253">
        <id>Q15125</id>
        <label>EBP</label>
    </interactant>
    <organismsDiffer>false</organismsDiffer>
    <experiments>3</experiments>
</comment>
<comment type="interaction">
    <interactant intactId="EBI-724839">
        <id>Q14318</id>
    </interactant>
    <interactant intactId="EBI-297353">
        <id>P00533</id>
        <label>EGFR</label>
    </interactant>
    <organismsDiffer>false</organismsDiffer>
    <experiments>4</experiments>
</comment>
<comment type="interaction">
    <interactant intactId="EBI-724839">
        <id>Q14318</id>
    </interactant>
    <interactant intactId="EBI-1174818">
        <id>Q9GZT9</id>
        <label>EGLN1</label>
    </interactant>
    <organismsDiffer>false</organismsDiffer>
    <experiments>6</experiments>
</comment>
<comment type="interaction">
    <interactant intactId="EBI-724839">
        <id>Q14318</id>
    </interactant>
    <interactant intactId="EBI-18535450">
        <id>Q9GZR5</id>
        <label>ELOVL4</label>
    </interactant>
    <organismsDiffer>false</organismsDiffer>
    <experiments>3</experiments>
</comment>
<comment type="interaction">
    <interactant intactId="EBI-724839">
        <id>Q14318</id>
    </interactant>
    <interactant intactId="EBI-781551">
        <id>Q9Y282</id>
        <label>ERGIC3</label>
    </interactant>
    <organismsDiffer>false</organismsDiffer>
    <experiments>3</experiments>
</comment>
<comment type="interaction">
    <interactant intactId="EBI-724839">
        <id>Q14318</id>
    </interactant>
    <interactant intactId="EBI-18636064">
        <id>Q8TBP5</id>
        <label>FAM174A</label>
    </interactant>
    <organismsDiffer>false</organismsDiffer>
    <experiments>3</experiments>
</comment>
<comment type="interaction">
    <interactant intactId="EBI-724839">
        <id>Q14318</id>
    </interactant>
    <interactant intactId="EBI-12836320">
        <id>Q92915-2</id>
        <label>FGF14</label>
    </interactant>
    <organismsDiffer>false</organismsDiffer>
    <experiments>3</experiments>
</comment>
<comment type="interaction">
    <interactant intactId="EBI-724839">
        <id>Q14318</id>
    </interactant>
    <interactant intactId="EBI-744771">
        <id>O75344</id>
        <label>FKBP6</label>
    </interactant>
    <organismsDiffer>false</organismsDiffer>
    <experiments>2</experiments>
</comment>
<comment type="interaction">
    <interactant intactId="EBI-724839">
        <id>Q14318</id>
    </interactant>
    <interactant intactId="EBI-724839">
        <id>Q14318</id>
        <label>FKBP8</label>
    </interactant>
    <organismsDiffer>false</organismsDiffer>
    <experiments>3</experiments>
</comment>
<comment type="interaction">
    <interactant intactId="EBI-724839">
        <id>Q14318</id>
    </interactant>
    <interactant intactId="EBI-296047">
        <id>P07900</id>
        <label>HSP90AA1</label>
    </interactant>
    <organismsDiffer>false</organismsDiffer>
    <experiments>8</experiments>
</comment>
<comment type="interaction">
    <interactant intactId="EBI-724839">
        <id>Q14318</id>
    </interactant>
    <interactant intactId="EBI-352572">
        <id>P08238</id>
        <label>HSP90AB1</label>
    </interactant>
    <organismsDiffer>false</organismsDiffer>
    <experiments>2</experiments>
</comment>
<comment type="interaction">
    <interactant intactId="EBI-724839">
        <id>Q14318</id>
    </interactant>
    <interactant intactId="EBI-10266796">
        <id>Q8N5M9</id>
        <label>JAGN1</label>
    </interactant>
    <organismsDiffer>false</organismsDiffer>
    <experiments>3</experiments>
</comment>
<comment type="interaction">
    <interactant intactId="EBI-724839">
        <id>Q14318</id>
    </interactant>
    <interactant intactId="EBI-373355">
        <id>Q5SR56</id>
        <label>MFSD14B</label>
    </interactant>
    <organismsDiffer>false</organismsDiffer>
    <experiments>3</experiments>
</comment>
<comment type="interaction">
    <interactant intactId="EBI-724839">
        <id>Q14318</id>
    </interactant>
    <interactant intactId="EBI-594836">
        <id>O00623</id>
        <label>PEX12</label>
    </interactant>
    <organismsDiffer>false</organismsDiffer>
    <experiments>3</experiments>
</comment>
<comment type="interaction">
    <interactant intactId="EBI-724839">
        <id>Q14318</id>
    </interactant>
    <interactant intactId="EBI-692836">
        <id>P26678</id>
        <label>PLN</label>
    </interactant>
    <organismsDiffer>false</organismsDiffer>
    <experiments>3</experiments>
</comment>
<comment type="interaction">
    <interactant intactId="EBI-724839">
        <id>Q14318</id>
    </interactant>
    <interactant intactId="EBI-10192441">
        <id>Q86VR2</id>
        <label>RETREG3</label>
    </interactant>
    <organismsDiffer>false</organismsDiffer>
    <experiments>3</experiments>
</comment>
<comment type="interaction">
    <interactant intactId="EBI-724839">
        <id>Q14318</id>
    </interactant>
    <interactant intactId="EBI-17589229">
        <id>Q6NTF9-3</id>
        <label>RHBDD2</label>
    </interactant>
    <organismsDiffer>false</organismsDiffer>
    <experiments>3</experiments>
</comment>
<comment type="interaction">
    <interactant intactId="EBI-724839">
        <id>Q14318</id>
    </interactant>
    <interactant intactId="EBI-17247926">
        <id>Q9NY72</id>
        <label>SCN3B</label>
    </interactant>
    <organismsDiffer>false</organismsDiffer>
    <experiments>3</experiments>
</comment>
<comment type="interaction">
    <interactant intactId="EBI-724839">
        <id>Q14318</id>
    </interactant>
    <interactant intactId="EBI-18159983">
        <id>Q3KNW5</id>
        <label>SLC10A6</label>
    </interactant>
    <organismsDiffer>false</organismsDiffer>
    <experiments>3</experiments>
</comment>
<comment type="interaction">
    <interactant intactId="EBI-724839">
        <id>Q14318</id>
    </interactant>
    <interactant intactId="EBI-18915901">
        <id>Q9BS91</id>
        <label>SLC35A5</label>
    </interactant>
    <organismsDiffer>false</organismsDiffer>
    <experiments>3</experiments>
</comment>
<comment type="interaction">
    <interactant intactId="EBI-724839">
        <id>Q14318</id>
    </interactant>
    <interactant intactId="EBI-12147661">
        <id>P78383</id>
        <label>SLC35B1</label>
    </interactant>
    <organismsDiffer>false</organismsDiffer>
    <experiments>3</experiments>
</comment>
<comment type="interaction">
    <interactant intactId="EBI-724839">
        <id>Q14318</id>
    </interactant>
    <interactant intactId="EBI-8638294">
        <id>Q9NUH8</id>
        <label>TMEM14B</label>
    </interactant>
    <organismsDiffer>false</organismsDiffer>
    <experiments>3</experiments>
</comment>
<comment type="interaction">
    <interactant intactId="EBI-724839">
        <id>Q14318</id>
    </interactant>
    <interactant intactId="EBI-11956809">
        <id>Q8TBM7</id>
        <label>TMEM254</label>
    </interactant>
    <organismsDiffer>false</organismsDiffer>
    <experiments>3</experiments>
</comment>
<comment type="interaction">
    <interactant intactId="EBI-724839">
        <id>Q14318</id>
    </interactant>
    <interactant intactId="EBI-721293">
        <id>Q9BTV4</id>
        <label>TMEM43</label>
    </interactant>
    <organismsDiffer>false</organismsDiffer>
    <experiments>3</experiments>
</comment>
<comment type="interaction">
    <interactant intactId="EBI-724839">
        <id>Q14318</id>
    </interactant>
    <interactant intactId="EBI-3923061">
        <id>Q96B21</id>
        <label>TMEM45B</label>
    </interactant>
    <organismsDiffer>false</organismsDiffer>
    <experiments>3</experiments>
</comment>
<comment type="interaction">
    <interactant intactId="EBI-724839">
        <id>Q14318</id>
    </interactant>
    <interactant intactId="EBI-11742770">
        <id>Q96HE8</id>
        <label>TMEM80</label>
    </interactant>
    <organismsDiffer>false</organismsDiffer>
    <experiments>3</experiments>
</comment>
<comment type="interaction">
    <interactant intactId="EBI-724839">
        <id>Q14318</id>
    </interactant>
    <interactant intactId="EBI-1051115">
        <id>Q9H3N1</id>
        <label>TMX1</label>
    </interactant>
    <organismsDiffer>false</organismsDiffer>
    <experiments>3</experiments>
</comment>
<comment type="interaction">
    <interactant intactId="EBI-724839">
        <id>Q14318</id>
    </interactant>
    <interactant intactId="EBI-718439">
        <id>O95159</id>
        <label>ZFPL1</label>
    </interactant>
    <organismsDiffer>false</organismsDiffer>
    <experiments>3</experiments>
</comment>
<comment type="interaction">
    <interactant intactId="EBI-724839">
        <id>Q14318</id>
    </interactant>
    <interactant intactId="EBI-3892947">
        <id>Q5T4F4</id>
        <label>ZFYVE27</label>
    </interactant>
    <organismsDiffer>false</organismsDiffer>
    <experiments>4</experiments>
</comment>
<comment type="interaction">
    <interactant intactId="EBI-724839">
        <id>Q14318</id>
    </interactant>
    <interactant intactId="EBI-7016711">
        <id>O39474</id>
        <label>NS5A</label>
    </interactant>
    <organismsDiffer>true</organismsDiffer>
    <experiments>16</experiments>
</comment>
<comment type="interaction">
    <interactant intactId="EBI-724839">
        <id>Q14318</id>
    </interactant>
    <interactant intactId="EBI-12577179">
        <id>C5E526</id>
        <label>PB1</label>
    </interactant>
    <organismsDiffer>true</organismsDiffer>
    <experiments>5</experiments>
</comment>
<comment type="interaction">
    <interactant intactId="EBI-724839">
        <id>Q14318</id>
    </interactant>
    <interactant intactId="EBI-2547514">
        <id>P03431</id>
        <label>PB1</label>
    </interactant>
    <organismsDiffer>true</organismsDiffer>
    <experiments>5</experiments>
</comment>
<comment type="interaction">
    <interactant intactId="EBI-724839">
        <id>Q14318</id>
    </interactant>
    <interactant intactId="EBI-6050669">
        <id>Q1K9H5</id>
        <label>PB1</label>
    </interactant>
    <organismsDiffer>true</organismsDiffer>
    <experiments>5</experiments>
</comment>
<comment type="interaction">
    <interactant intactId="EBI-724839">
        <id>Q14318</id>
    </interactant>
    <interactant intactId="EBI-12577201">
        <id>Q5EP37</id>
        <label>PB1</label>
    </interactant>
    <organismsDiffer>true</organismsDiffer>
    <experiments>3</experiments>
</comment>
<comment type="interaction">
    <interactant intactId="EBI-724839">
        <id>Q14318</id>
    </interactant>
    <interactant intactId="EBI-6863748">
        <id>PRO_0000037551</id>
        <dbReference type="UniProtKB" id="Q9WMX2"/>
    </interactant>
    <organismsDiffer>true</organismsDiffer>
    <experiments>11</experiments>
</comment>
<comment type="interaction">
    <interactant intactId="EBI-10968017">
        <id>Q14318-2</id>
    </interactant>
    <interactant intactId="EBI-55022150">
        <id>Q15746-1</id>
        <label>MYLK</label>
    </interactant>
    <organismsDiffer>false</organismsDiffer>
    <experiments>5</experiments>
</comment>
<comment type="subcellular location">
    <subcellularLocation>
        <location evidence="8">Mitochondrion</location>
    </subcellularLocation>
    <subcellularLocation>
        <location evidence="19">Mitochondrion membrane</location>
        <topology>Single-pass membrane protein</topology>
        <orientation evidence="19">Cytoplasmic side</orientation>
    </subcellularLocation>
</comment>
<comment type="subcellular location">
    <molecule>Isoform 1</molecule>
    <subcellularLocation>
        <location evidence="4 11">Mitochondrion membrane</location>
        <topology>Single-pass membrane protein</topology>
        <orientation evidence="19">Cytoplasmic side</orientation>
    </subcellularLocation>
</comment>
<comment type="subcellular location">
    <molecule>Isoform 3</molecule>
    <subcellularLocation>
        <location evidence="11">Mitochondrion membrane</location>
        <topology>Single-pass membrane protein</topology>
        <orientation evidence="19">Cytoplasmic side</orientation>
    </subcellularLocation>
</comment>
<comment type="alternative products">
    <event type="alternative splicing"/>
    <isoform>
        <id>Q14318-1</id>
        <name>1</name>
        <sequence type="displayed"/>
    </isoform>
    <isoform>
        <id>Q14318-2</id>
        <name>2</name>
        <sequence type="described" ref="VSP_034486"/>
    </isoform>
    <isoform>
        <id>Q14318-3</id>
        <name>3</name>
        <sequence type="described" ref="VSP_047717"/>
    </isoform>
</comment>
<comment type="tissue specificity">
    <text evidence="11">Widely expressed. Highest levels seen in the brain. Highly abundant in the retina.</text>
</comment>
<comment type="PTM">
    <text evidence="14">Ubiquitinated by PRKN during mitophagy, leading to its degradation and enhancement of mitophagy. Deubiquitinated by USP30.</text>
</comment>
<comment type="miscellaneous">
    <text>Binds the immunosuppressant FK506 only in its calmodulin/calcium activated form.</text>
</comment>
<comment type="miscellaneous">
    <molecule>Isoform 3</molecule>
    <text evidence="19">Interacts with BCL2L1/BCLX.</text>
</comment>
<comment type="caution">
    <text evidence="19">It is uncertain whether Met-1 or Met-58 is the initiator.</text>
</comment>
<comment type="sequence caution" evidence="19">
    <conflict type="miscellaneous discrepancy">
        <sequence resource="EMBL-CDS" id="AAB00102"/>
    </conflict>
    <text>The first part of the cDNA maps to the same locus, but in opposite orientation.</text>
</comment>
<comment type="sequence caution" evidence="19">
    <conflict type="erroneous initiation">
        <sequence resource="EMBL-CDS" id="AAH09966"/>
    </conflict>
    <text>Truncated N-terminus.</text>
</comment>
<comment type="sequence caution" evidence="19">
    <conflict type="erroneous initiation">
        <sequence resource="EMBL-CDS" id="CAD98028"/>
    </conflict>
    <text>Extended N-terminus.</text>
</comment>
<comment type="online information" name="Atlas of Genetics and Cytogenetics in Oncology and Haematology">
    <link uri="https://atlasgeneticsoncology.org/gene/40579/FKBP8"/>
</comment>
<gene>
    <name type="primary">FKBP8</name>
    <name type="synonym">FKBP38</name>
</gene>
<sequence>MASCAEPSEPSAPLPAGVPPLEDFEVLDGVEDAEGEEEEEEEEEEEDDLSELPPLEDMGQPPAEEAEQPGALAREFLAAMEPEPAPAPAPEEWLDILGNGLLRKKTLVPGPPGSSRPVKGQVVTVHLQTSLENGTRVQEEPELVFTLGDCDVIQALDLSVPLMDVGETAMVTADSKYCYGPQGRSPYIPPHAALCLEVTLKTAVDGPDLEMLTGQERVALANRKRECGNAHYQRADFVLAANSYDLAIKAITSSAKVDMTFEEEAQLLQLKVKCLNNLAASQLKLDHYRAALRSCSLVLEHQPDNIKALFRKGKVLAQQGEYSEAIPILRAALKLEPSNKTIHAELSKLVKKHAAQRSTETALYRKMLGNPSRLPAKCPGKGAWSIPWKWLFGATAVALGGVALSVVIAARN</sequence>
<keyword id="KW-0002">3D-structure</keyword>
<keyword id="KW-0025">Alternative splicing</keyword>
<keyword id="KW-0053">Apoptosis</keyword>
<keyword id="KW-0106">Calcium</keyword>
<keyword id="KW-0945">Host-virus interaction</keyword>
<keyword id="KW-0413">Isomerase</keyword>
<keyword id="KW-1017">Isopeptide bond</keyword>
<keyword id="KW-0472">Membrane</keyword>
<keyword id="KW-0479">Metal-binding</keyword>
<keyword id="KW-0496">Mitochondrion</keyword>
<keyword id="KW-0597">Phosphoprotein</keyword>
<keyword id="KW-1267">Proteomics identification</keyword>
<keyword id="KW-1185">Reference proteome</keyword>
<keyword id="KW-0677">Repeat</keyword>
<keyword id="KW-0697">Rotamase</keyword>
<keyword id="KW-0802">TPR repeat</keyword>
<keyword id="KW-0812">Transmembrane</keyword>
<keyword id="KW-1133">Transmembrane helix</keyword>
<keyword id="KW-0832">Ubl conjugation</keyword>
<name>FKBP8_HUMAN</name>
<reference key="1">
    <citation type="journal article" date="2003" name="Nat. Cell Biol.">
        <title>Inherent calcineurin inhibitor FKBP38 targets Bcl-2 to mitochondria and inhibits apoptosis.</title>
        <authorList>
            <person name="Shirane M."/>
            <person name="Nakayama K.I."/>
        </authorList>
    </citation>
    <scope>NUCLEOTIDE SEQUENCE [MRNA] (ISOFORM 1)</scope>
    <scope>FUNCTION</scope>
    <scope>INTERACTION WITH BCL2 AND BCL2L1/BCLXL</scope>
    <scope>SUBCELLULAR LOCATION</scope>
</reference>
<reference key="2">
    <citation type="journal article" date="2004" name="Development">
        <title>FKBP8 is a negative regulator of mouse sonic hedgehog signaling in neural tissues.</title>
        <authorList>
            <person name="Bulgakov O.V."/>
            <person name="Eggenschwiler J.T."/>
            <person name="Hong D.-H."/>
            <person name="Anderson K.V."/>
            <person name="Li T."/>
        </authorList>
    </citation>
    <scope>NUCLEOTIDE SEQUENCE [MRNA] (ISOFORM 1)</scope>
</reference>
<reference key="3">
    <citation type="journal article" date="2008" name="Invest. Ophthalmol. Vis. Sci.">
        <title>Characterization of a Bcl-XL-interacting protein FKBP8 and its splice variant in human RPE cells.</title>
        <authorList>
            <person name="Chen Y."/>
            <person name="Sternberg P."/>
            <person name="Cai J."/>
        </authorList>
    </citation>
    <scope>NUCLEOTIDE SEQUENCE [MRNA] (ISOFORM 3)</scope>
    <scope>SUBCELLULAR LOCATION</scope>
    <scope>INTERACTION WITH BCL2L1</scope>
    <scope>TISSUE SPECIFICITY</scope>
    <source>
        <tissue>Retinal pigment epithelium</tissue>
    </source>
</reference>
<reference key="4">
    <citation type="journal article" date="2007" name="BMC Genomics">
        <title>The full-ORF clone resource of the German cDNA consortium.</title>
        <authorList>
            <person name="Bechtel S."/>
            <person name="Rosenfelder H."/>
            <person name="Duda A."/>
            <person name="Schmidt C.P."/>
            <person name="Ernst U."/>
            <person name="Wellenreuther R."/>
            <person name="Mehrle A."/>
            <person name="Schuster C."/>
            <person name="Bahr A."/>
            <person name="Bloecker H."/>
            <person name="Heubner D."/>
            <person name="Hoerlein A."/>
            <person name="Michel G."/>
            <person name="Wedler H."/>
            <person name="Koehrer K."/>
            <person name="Ottenwaelder B."/>
            <person name="Poustka A."/>
            <person name="Wiemann S."/>
            <person name="Schupp I."/>
        </authorList>
    </citation>
    <scope>NUCLEOTIDE SEQUENCE [LARGE SCALE MRNA] (ISOFORM 2)</scope>
    <source>
        <tissue>Colon endothelium</tissue>
    </source>
</reference>
<reference key="5">
    <citation type="journal article" date="2004" name="Nature">
        <title>The DNA sequence and biology of human chromosome 19.</title>
        <authorList>
            <person name="Grimwood J."/>
            <person name="Gordon L.A."/>
            <person name="Olsen A.S."/>
            <person name="Terry A."/>
            <person name="Schmutz J."/>
            <person name="Lamerdin J.E."/>
            <person name="Hellsten U."/>
            <person name="Goodstein D."/>
            <person name="Couronne O."/>
            <person name="Tran-Gyamfi M."/>
            <person name="Aerts A."/>
            <person name="Altherr M."/>
            <person name="Ashworth L."/>
            <person name="Bajorek E."/>
            <person name="Black S."/>
            <person name="Branscomb E."/>
            <person name="Caenepeel S."/>
            <person name="Carrano A.V."/>
            <person name="Caoile C."/>
            <person name="Chan Y.M."/>
            <person name="Christensen M."/>
            <person name="Cleland C.A."/>
            <person name="Copeland A."/>
            <person name="Dalin E."/>
            <person name="Dehal P."/>
            <person name="Denys M."/>
            <person name="Detter J.C."/>
            <person name="Escobar J."/>
            <person name="Flowers D."/>
            <person name="Fotopulos D."/>
            <person name="Garcia C."/>
            <person name="Georgescu A.M."/>
            <person name="Glavina T."/>
            <person name="Gomez M."/>
            <person name="Gonzales E."/>
            <person name="Groza M."/>
            <person name="Hammon N."/>
            <person name="Hawkins T."/>
            <person name="Haydu L."/>
            <person name="Ho I."/>
            <person name="Huang W."/>
            <person name="Israni S."/>
            <person name="Jett J."/>
            <person name="Kadner K."/>
            <person name="Kimball H."/>
            <person name="Kobayashi A."/>
            <person name="Larionov V."/>
            <person name="Leem S.-H."/>
            <person name="Lopez F."/>
            <person name="Lou Y."/>
            <person name="Lowry S."/>
            <person name="Malfatti S."/>
            <person name="Martinez D."/>
            <person name="McCready P.M."/>
            <person name="Medina C."/>
            <person name="Morgan J."/>
            <person name="Nelson K."/>
            <person name="Nolan M."/>
            <person name="Ovcharenko I."/>
            <person name="Pitluck S."/>
            <person name="Pollard M."/>
            <person name="Popkie A.P."/>
            <person name="Predki P."/>
            <person name="Quan G."/>
            <person name="Ramirez L."/>
            <person name="Rash S."/>
            <person name="Retterer J."/>
            <person name="Rodriguez A."/>
            <person name="Rogers S."/>
            <person name="Salamov A."/>
            <person name="Salazar A."/>
            <person name="She X."/>
            <person name="Smith D."/>
            <person name="Slezak T."/>
            <person name="Solovyev V."/>
            <person name="Thayer N."/>
            <person name="Tice H."/>
            <person name="Tsai M."/>
            <person name="Ustaszewska A."/>
            <person name="Vo N."/>
            <person name="Wagner M."/>
            <person name="Wheeler J."/>
            <person name="Wu K."/>
            <person name="Xie G."/>
            <person name="Yang J."/>
            <person name="Dubchak I."/>
            <person name="Furey T.S."/>
            <person name="DeJong P."/>
            <person name="Dickson M."/>
            <person name="Gordon D."/>
            <person name="Eichler E.E."/>
            <person name="Pennacchio L.A."/>
            <person name="Richardson P."/>
            <person name="Stubbs L."/>
            <person name="Rokhsar D.S."/>
            <person name="Myers R.M."/>
            <person name="Rubin E.M."/>
            <person name="Lucas S.M."/>
        </authorList>
    </citation>
    <scope>NUCLEOTIDE SEQUENCE [LARGE SCALE GENOMIC DNA]</scope>
</reference>
<reference key="6">
    <citation type="submission" date="2005-07" db="EMBL/GenBank/DDBJ databases">
        <authorList>
            <person name="Mural R.J."/>
            <person name="Istrail S."/>
            <person name="Sutton G.G."/>
            <person name="Florea L."/>
            <person name="Halpern A.L."/>
            <person name="Mobarry C.M."/>
            <person name="Lippert R."/>
            <person name="Walenz B."/>
            <person name="Shatkay H."/>
            <person name="Dew I."/>
            <person name="Miller J.R."/>
            <person name="Flanigan M.J."/>
            <person name="Edwards N.J."/>
            <person name="Bolanos R."/>
            <person name="Fasulo D."/>
            <person name="Halldorsson B.V."/>
            <person name="Hannenhalli S."/>
            <person name="Turner R."/>
            <person name="Yooseph S."/>
            <person name="Lu F."/>
            <person name="Nusskern D.R."/>
            <person name="Shue B.C."/>
            <person name="Zheng X.H."/>
            <person name="Zhong F."/>
            <person name="Delcher A.L."/>
            <person name="Huson D.H."/>
            <person name="Kravitz S.A."/>
            <person name="Mouchard L."/>
            <person name="Reinert K."/>
            <person name="Remington K.A."/>
            <person name="Clark A.G."/>
            <person name="Waterman M.S."/>
            <person name="Eichler E.E."/>
            <person name="Adams M.D."/>
            <person name="Hunkapiller M.W."/>
            <person name="Myers E.W."/>
            <person name="Venter J.C."/>
        </authorList>
    </citation>
    <scope>NUCLEOTIDE SEQUENCE [LARGE SCALE GENOMIC DNA]</scope>
</reference>
<reference key="7">
    <citation type="journal article" date="1995" name="Gene">
        <title>Isolation of a cDNA encoding a novel human FK506-binding protein homolog containing leucine zipper and tetratricopeptide repeat motifs.</title>
        <authorList>
            <person name="Lam E."/>
            <person name="Martin M."/>
            <person name="Wiederrecht G."/>
        </authorList>
    </citation>
    <scope>NUCLEOTIDE SEQUENCE [MRNA] OF 35-412 (ISOFORM 1)</scope>
</reference>
<reference key="8">
    <citation type="submission" date="2005-04" db="EMBL/GenBank/DDBJ databases">
        <authorList>
            <person name="Suzuki Y."/>
            <person name="Sugano S."/>
            <person name="Totoki Y."/>
            <person name="Toyoda A."/>
            <person name="Takeda T."/>
            <person name="Sakaki Y."/>
            <person name="Tanaka A."/>
            <person name="Yokoyama S."/>
        </authorList>
    </citation>
    <scope>NUCLEOTIDE SEQUENCE [LARGE SCALE MRNA] OF 42-412 (ISOFORM 2)</scope>
    <source>
        <tissue>Liver</tissue>
    </source>
</reference>
<reference key="9">
    <citation type="journal article" date="2004" name="Genome Res.">
        <title>The status, quality, and expansion of the NIH full-length cDNA project: the Mammalian Gene Collection (MGC).</title>
        <authorList>
            <consortium name="The MGC Project Team"/>
        </authorList>
    </citation>
    <scope>NUCLEOTIDE SEQUENCE [LARGE SCALE MRNA] OF 54-412 (ISOFORM 1)</scope>
    <source>
        <tissue>Pancreas</tissue>
    </source>
</reference>
<reference key="10">
    <citation type="journal article" date="2005" name="Biochem. Biophys. Res. Commun.">
        <title>Molecular characterization of FK-506 binding protein 38 and its potential regulatory role on the anti-apoptotic protein Bcl-2.</title>
        <authorList>
            <person name="Kang C.B."/>
            <person name="Feng L."/>
            <person name="Chia J."/>
            <person name="Yoon H.S."/>
        </authorList>
    </citation>
    <scope>FUNCTION</scope>
    <scope>SUBCELLULAR LOCATION</scope>
</reference>
<reference key="11">
    <citation type="journal article" date="2005" name="EMBO J.">
        <title>Bcl-2 regulator FKBP38 is activated by Ca2+/calmodulin.</title>
        <authorList>
            <person name="Edlich F."/>
            <person name="Weiwad M."/>
            <person name="Erdmann F."/>
            <person name="Fanghaenel J."/>
            <person name="Jarczowski F."/>
            <person name="Rahfeld J.-U."/>
            <person name="Fischer G."/>
        </authorList>
    </citation>
    <scope>CATALYTIC ACTIVITY</scope>
    <scope>COFACTOR</scope>
</reference>
<reference key="12">
    <citation type="journal article" date="2005" name="FEBS Lett.">
        <title>A reassessment of the inhibitory capacity of human FKBP38 on calcineurin.</title>
        <authorList>
            <person name="Weiwad M."/>
            <person name="Edlich F."/>
            <person name="Erdmann F."/>
            <person name="Jarczowski F."/>
            <person name="Kilka S."/>
            <person name="Dorn M."/>
            <person name="Pechstein A."/>
            <person name="Fischer G."/>
        </authorList>
    </citation>
    <scope>FUNCTION</scope>
    <scope>ABSENCE OF DIRECT INTERACTION WITH CALCINEURIN</scope>
</reference>
<reference key="13">
    <citation type="journal article" date="2005" name="FEBS Lett.">
        <title>The flexible loop of Bcl-2 is required for molecular interaction with immunosuppressant FK-506 binding protein 38 (FKBP38).</title>
        <authorList>
            <person name="Kang C.B."/>
            <person name="Tai J."/>
            <person name="Chia J."/>
            <person name="Yoon H.S."/>
        </authorList>
    </citation>
    <scope>INTERACTION WITH BCL2</scope>
</reference>
<reference key="14">
    <citation type="journal article" date="2005" name="Nat. Biotechnol.">
        <title>Immunoaffinity profiling of tyrosine phosphorylation in cancer cells.</title>
        <authorList>
            <person name="Rush J."/>
            <person name="Moritz A."/>
            <person name="Lee K.A."/>
            <person name="Guo A."/>
            <person name="Goss V.L."/>
            <person name="Spek E.J."/>
            <person name="Zhang H."/>
            <person name="Zha X.-M."/>
            <person name="Polakiewicz R.D."/>
            <person name="Comb M.J."/>
        </authorList>
    </citation>
    <scope>IDENTIFICATION BY MASS SPECTROMETRY [LARGE SCALE ANALYSIS]</scope>
</reference>
<reference key="15">
    <citation type="journal article" date="2006" name="J. Biol. Chem.">
        <title>Bcl-2 localized at the nuclear compartment induces apoptosis after transient overexpression.</title>
        <authorList>
            <person name="Portier B.P."/>
            <person name="Taglialatela G."/>
        </authorList>
    </citation>
    <scope>INTERACTION WITH BCL2</scope>
</reference>
<reference key="16">
    <citation type="journal article" date="2006" name="FEBS Lett.">
        <title>Hepatitis C virus non-structural protein NS5A interacts with FKBP38 and inhibits apoptosis in Huh7 hepatoma cells.</title>
        <authorList>
            <person name="Wang J."/>
            <person name="Tong W."/>
            <person name="Zhang X."/>
            <person name="Chen L."/>
            <person name="Yi Z."/>
            <person name="Pan T."/>
            <person name="Hu Y."/>
            <person name="Xiang L."/>
            <person name="Yuan Z."/>
        </authorList>
    </citation>
    <scope>INTERACTION WITH HCV NS5A (MICROBIAL INFECTION)</scope>
</reference>
<reference key="17">
    <citation type="journal article" date="2008" name="Genes Cells">
        <title>Regulation of apoptosis and neurite extension by FKBP38 is required for neural tube formation in the mouse.</title>
        <authorList>
            <person name="Shirane M."/>
            <person name="Ogawa M."/>
            <person name="Motoyama J."/>
            <person name="Nakayama K.I."/>
        </authorList>
    </citation>
    <scope>INTERACTION WITH ZFYVE27</scope>
</reference>
<reference key="18">
    <citation type="journal article" date="2011" name="BMC Syst. Biol.">
        <title>Initial characterization of the human central proteome.</title>
        <authorList>
            <person name="Burkard T.R."/>
            <person name="Planyavsky M."/>
            <person name="Kaupe I."/>
            <person name="Breitwieser F.P."/>
            <person name="Buerckstuemmer T."/>
            <person name="Bennett K.L."/>
            <person name="Superti-Furga G."/>
            <person name="Colinge J."/>
        </authorList>
    </citation>
    <scope>IDENTIFICATION BY MASS SPECTROMETRY [LARGE SCALE ANALYSIS]</scope>
</reference>
<reference key="19">
    <citation type="journal article" date="2013" name="J. Proteome Res.">
        <title>Toward a comprehensive characterization of a human cancer cell phosphoproteome.</title>
        <authorList>
            <person name="Zhou H."/>
            <person name="Di Palma S."/>
            <person name="Preisinger C."/>
            <person name="Peng M."/>
            <person name="Polat A.N."/>
            <person name="Heck A.J."/>
            <person name="Mohammed S."/>
        </authorList>
    </citation>
    <scope>PHOSPHORYLATION [LARGE SCALE ANALYSIS] AT SER-296</scope>
    <scope>IDENTIFICATION BY MASS SPECTROMETRY [LARGE SCALE ANALYSIS]</scope>
    <source>
        <tissue>Erythroleukemia</tissue>
    </source>
</reference>
<reference key="20">
    <citation type="journal article" date="2015" name="Nat. Cell Biol.">
        <title>USP30 and parkin homeostatically regulate atypical ubiquitin chains on mitochondria.</title>
        <authorList>
            <person name="Cunningham C.N."/>
            <person name="Baughman J.M."/>
            <person name="Phu L."/>
            <person name="Tea J.S."/>
            <person name="Yu C."/>
            <person name="Coons M."/>
            <person name="Kirkpatrick D.S."/>
            <person name="Bingol B."/>
            <person name="Corn J.E."/>
        </authorList>
    </citation>
    <scope>UBIQUITINATION AT LYS-249; LYS-271; LYS-273; LYS-284; LYS-307; LYS-314; LYS-334; LYS-340; LYS-348; LYS-351 AND LYS-352</scope>
</reference>
<reference key="21">
    <citation type="journal article" date="2015" name="Proteomics">
        <title>N-terminome analysis of the human mitochondrial proteome.</title>
        <authorList>
            <person name="Vaca Jacome A.S."/>
            <person name="Rabilloud T."/>
            <person name="Schaeffer-Reiss C."/>
            <person name="Rompais M."/>
            <person name="Ayoub D."/>
            <person name="Lane L."/>
            <person name="Bairoch A."/>
            <person name="Van Dorsselaer A."/>
            <person name="Carapito C."/>
        </authorList>
    </citation>
    <scope>IDENTIFICATION BY MASS SPECTROMETRY [LARGE SCALE ANALYSIS]</scope>
</reference>
<reference key="22">
    <citation type="journal article" date="2017" name="Nat. Commun.">
        <title>Comparative influenza protein interactomes identify the role of plakophilin 2 in virus restriction.</title>
        <authorList>
            <person name="Wang L."/>
            <person name="Fu B."/>
            <person name="Li W."/>
            <person name="Patil G."/>
            <person name="Liu L."/>
            <person name="Dorf M.E."/>
            <person name="Li S."/>
        </authorList>
    </citation>
    <scope>FUNCTION</scope>
</reference>
<reference key="23">
    <citation type="journal article" date="2006" name="J. Biomol. NMR">
        <title>Solution structure of the FK506-binding domain of human FKBP38.</title>
        <authorList>
            <person name="Maestre-Martinez M."/>
            <person name="Edlich F."/>
            <person name="Jarczowski F."/>
            <person name="Weiwad M."/>
            <person name="Fischer G."/>
            <person name="Luecke C."/>
        </authorList>
    </citation>
    <scope>STRUCTURE BY NMR OF 92-210</scope>
</reference>
<reference key="24">
    <citation type="submission" date="2006-06" db="PDB data bank">
        <title>Solution structure of RSGI RUH-047, an FKBP domain from human cDNA.</title>
        <authorList>
            <consortium name="RIKEN structural genomics initiative (RSGI)"/>
        </authorList>
    </citation>
    <scope>STRUCTURE BY NMR OF 91-205</scope>
</reference>
<reference key="25">
    <citation type="submission" date="2006-10" db="PDB data bank">
        <title>Structure of the human FK-506 binding protein 8.</title>
        <authorList>
            <consortium name="Structural genomics consortium (SGC)"/>
        </authorList>
    </citation>
    <scope>X-RAY CRYSTALLOGRAPHY (1.6 ANGSTROMS) OF 90-205</scope>
</reference>
<reference key="26">
    <citation type="journal article" date="2011" name="J. Mol. Recognit.">
        <title>A charge-sensitive loop in the FKBP38 catalytic domain modulates Bcl-2 binding.</title>
        <authorList>
            <person name="Maestre-Martinez M."/>
            <person name="Haupt K."/>
            <person name="Edlich F."/>
            <person name="Neumann P."/>
            <person name="Parthier C."/>
            <person name="Stubbs M.T."/>
            <person name="Fischer G."/>
            <person name="Lucke C."/>
        </authorList>
    </citation>
    <scope>X-RAY CRYSTALLOGRAPHY (1.05 ANGSTROMS) OF 92-210</scope>
    <scope>METAL-BINDING SITES</scope>
    <scope>MUTAGENESIS OF ASP-149 AND ASP-151</scope>
</reference>
<protein>
    <recommendedName>
        <fullName>Peptidyl-prolyl cis-trans isomerase FKBP8</fullName>
        <shortName>PPIase FKBP8</shortName>
        <ecNumber>5.2.1.8</ecNumber>
    </recommendedName>
    <alternativeName>
        <fullName>38 kDa FK506-binding protein</fullName>
        <shortName>38 kDa FKBP</shortName>
        <shortName>FKBP-38</shortName>
        <shortName>hFKBP38</shortName>
    </alternativeName>
    <alternativeName>
        <fullName>FK506-binding protein 8</fullName>
        <shortName>FKBP-8</shortName>
    </alternativeName>
    <alternativeName>
        <fullName>FKBPR38</fullName>
    </alternativeName>
    <alternativeName>
        <fullName>Rotamase</fullName>
    </alternativeName>
</protein>
<organism>
    <name type="scientific">Homo sapiens</name>
    <name type="common">Human</name>
    <dbReference type="NCBI Taxonomy" id="9606"/>
    <lineage>
        <taxon>Eukaryota</taxon>
        <taxon>Metazoa</taxon>
        <taxon>Chordata</taxon>
        <taxon>Craniata</taxon>
        <taxon>Vertebrata</taxon>
        <taxon>Euteleostomi</taxon>
        <taxon>Mammalia</taxon>
        <taxon>Eutheria</taxon>
        <taxon>Euarchontoglires</taxon>
        <taxon>Primates</taxon>
        <taxon>Haplorrhini</taxon>
        <taxon>Catarrhini</taxon>
        <taxon>Hominidae</taxon>
        <taxon>Homo</taxon>
    </lineage>
</organism>